<feature type="chain" id="PRO_0000106721" description="Uncharacterized protein MJ0157">
    <location>
        <begin position="1"/>
        <end position="96"/>
    </location>
</feature>
<dbReference type="EMBL" id="L77117">
    <property type="protein sequence ID" value="AAB98150.1"/>
    <property type="molecule type" value="Genomic_DNA"/>
</dbReference>
<dbReference type="PIR" id="F64319">
    <property type="entry name" value="F64319"/>
</dbReference>
<dbReference type="SMR" id="Q57621"/>
<dbReference type="PaxDb" id="243232-MJ_0157"/>
<dbReference type="EnsemblBacteria" id="AAB98150">
    <property type="protein sequence ID" value="AAB98150"/>
    <property type="gene ID" value="MJ_0157"/>
</dbReference>
<dbReference type="KEGG" id="mja:MJ_0157"/>
<dbReference type="eggNOG" id="arCOG04846">
    <property type="taxonomic scope" value="Archaea"/>
</dbReference>
<dbReference type="HOGENOM" id="CLU_159088_1_1_2"/>
<dbReference type="InParanoid" id="Q57621"/>
<dbReference type="PhylomeDB" id="Q57621"/>
<dbReference type="Proteomes" id="UP000000805">
    <property type="component" value="Chromosome"/>
</dbReference>
<dbReference type="InterPro" id="IPR019209">
    <property type="entry name" value="DUF2098"/>
</dbReference>
<dbReference type="InterPro" id="IPR017099">
    <property type="entry name" value="UCP037053"/>
</dbReference>
<dbReference type="Pfam" id="PF09871">
    <property type="entry name" value="DUF2098"/>
    <property type="match status" value="1"/>
</dbReference>
<dbReference type="PIRSF" id="PIRSF037053">
    <property type="entry name" value="UCP037053"/>
    <property type="match status" value="1"/>
</dbReference>
<name>Y157_METJA</name>
<keyword id="KW-1185">Reference proteome</keyword>
<protein>
    <recommendedName>
        <fullName>Uncharacterized protein MJ0157</fullName>
    </recommendedName>
</protein>
<proteinExistence type="predicted"/>
<reference key="1">
    <citation type="journal article" date="1996" name="Science">
        <title>Complete genome sequence of the methanogenic archaeon, Methanococcus jannaschii.</title>
        <authorList>
            <person name="Bult C.J."/>
            <person name="White O."/>
            <person name="Olsen G.J."/>
            <person name="Zhou L."/>
            <person name="Fleischmann R.D."/>
            <person name="Sutton G.G."/>
            <person name="Blake J.A."/>
            <person name="FitzGerald L.M."/>
            <person name="Clayton R.A."/>
            <person name="Gocayne J.D."/>
            <person name="Kerlavage A.R."/>
            <person name="Dougherty B.A."/>
            <person name="Tomb J.-F."/>
            <person name="Adams M.D."/>
            <person name="Reich C.I."/>
            <person name="Overbeek R."/>
            <person name="Kirkness E.F."/>
            <person name="Weinstock K.G."/>
            <person name="Merrick J.M."/>
            <person name="Glodek A."/>
            <person name="Scott J.L."/>
            <person name="Geoghagen N.S.M."/>
            <person name="Weidman J.F."/>
            <person name="Fuhrmann J.L."/>
            <person name="Nguyen D."/>
            <person name="Utterback T.R."/>
            <person name="Kelley J.M."/>
            <person name="Peterson J.D."/>
            <person name="Sadow P.W."/>
            <person name="Hanna M.C."/>
            <person name="Cotton M.D."/>
            <person name="Roberts K.M."/>
            <person name="Hurst M.A."/>
            <person name="Kaine B.P."/>
            <person name="Borodovsky M."/>
            <person name="Klenk H.-P."/>
            <person name="Fraser C.M."/>
            <person name="Smith H.O."/>
            <person name="Woese C.R."/>
            <person name="Venter J.C."/>
        </authorList>
    </citation>
    <scope>NUCLEOTIDE SEQUENCE [LARGE SCALE GENOMIC DNA]</scope>
    <source>
        <strain>ATCC 43067 / DSM 2661 / JAL-1 / JCM 10045 / NBRC 100440</strain>
    </source>
</reference>
<accession>Q57621</accession>
<sequence length="96" mass="10954">MGYMDEVNIKVGDYVVYINTGTKGRVVDIRKDENGDIWVVLDNNLMYRPHLLRVIDKSKITERKEDIDEVVKKLEKEELEEGKLIDLDLGDACGAG</sequence>
<gene>
    <name type="ordered locus">MJ0157</name>
</gene>
<organism>
    <name type="scientific">Methanocaldococcus jannaschii (strain ATCC 43067 / DSM 2661 / JAL-1 / JCM 10045 / NBRC 100440)</name>
    <name type="common">Methanococcus jannaschii</name>
    <dbReference type="NCBI Taxonomy" id="243232"/>
    <lineage>
        <taxon>Archaea</taxon>
        <taxon>Methanobacteriati</taxon>
        <taxon>Methanobacteriota</taxon>
        <taxon>Methanomada group</taxon>
        <taxon>Methanococci</taxon>
        <taxon>Methanococcales</taxon>
        <taxon>Methanocaldococcaceae</taxon>
        <taxon>Methanocaldococcus</taxon>
    </lineage>
</organism>